<proteinExistence type="inferred from homology"/>
<name>RL9_STAAS</name>
<gene>
    <name evidence="1" type="primary">rplI</name>
    <name type="ordered locus">SAS0015</name>
</gene>
<protein>
    <recommendedName>
        <fullName evidence="1">Large ribosomal subunit protein bL9</fullName>
    </recommendedName>
    <alternativeName>
        <fullName evidence="2">50S ribosomal protein L9</fullName>
    </alternativeName>
</protein>
<dbReference type="EMBL" id="BX571857">
    <property type="protein sequence ID" value="CAG41787.1"/>
    <property type="molecule type" value="Genomic_DNA"/>
</dbReference>
<dbReference type="RefSeq" id="WP_000864305.1">
    <property type="nucleotide sequence ID" value="NC_002953.3"/>
</dbReference>
<dbReference type="SMR" id="Q6GD75"/>
<dbReference type="KEGG" id="sas:SAS0015"/>
<dbReference type="HOGENOM" id="CLU_078938_3_2_9"/>
<dbReference type="GO" id="GO:1990904">
    <property type="term" value="C:ribonucleoprotein complex"/>
    <property type="evidence" value="ECO:0007669"/>
    <property type="project" value="UniProtKB-KW"/>
</dbReference>
<dbReference type="GO" id="GO:0005840">
    <property type="term" value="C:ribosome"/>
    <property type="evidence" value="ECO:0007669"/>
    <property type="project" value="UniProtKB-KW"/>
</dbReference>
<dbReference type="GO" id="GO:0019843">
    <property type="term" value="F:rRNA binding"/>
    <property type="evidence" value="ECO:0007669"/>
    <property type="project" value="UniProtKB-UniRule"/>
</dbReference>
<dbReference type="GO" id="GO:0003735">
    <property type="term" value="F:structural constituent of ribosome"/>
    <property type="evidence" value="ECO:0007669"/>
    <property type="project" value="InterPro"/>
</dbReference>
<dbReference type="GO" id="GO:0006412">
    <property type="term" value="P:translation"/>
    <property type="evidence" value="ECO:0007669"/>
    <property type="project" value="UniProtKB-UniRule"/>
</dbReference>
<dbReference type="FunFam" id="3.10.430.100:FF:000002">
    <property type="entry name" value="50S ribosomal protein L9"/>
    <property type="match status" value="1"/>
</dbReference>
<dbReference type="FunFam" id="3.40.5.10:FF:000002">
    <property type="entry name" value="50S ribosomal protein L9"/>
    <property type="match status" value="1"/>
</dbReference>
<dbReference type="Gene3D" id="3.10.430.100">
    <property type="entry name" value="Ribosomal protein L9, C-terminal domain"/>
    <property type="match status" value="1"/>
</dbReference>
<dbReference type="Gene3D" id="3.40.5.10">
    <property type="entry name" value="Ribosomal protein L9, N-terminal domain"/>
    <property type="match status" value="1"/>
</dbReference>
<dbReference type="HAMAP" id="MF_00503">
    <property type="entry name" value="Ribosomal_bL9"/>
    <property type="match status" value="1"/>
</dbReference>
<dbReference type="InterPro" id="IPR000244">
    <property type="entry name" value="Ribosomal_bL9"/>
</dbReference>
<dbReference type="InterPro" id="IPR009027">
    <property type="entry name" value="Ribosomal_bL9/RNase_H1_N"/>
</dbReference>
<dbReference type="InterPro" id="IPR020594">
    <property type="entry name" value="Ribosomal_bL9_bac/chp"/>
</dbReference>
<dbReference type="InterPro" id="IPR020069">
    <property type="entry name" value="Ribosomal_bL9_C"/>
</dbReference>
<dbReference type="InterPro" id="IPR036791">
    <property type="entry name" value="Ribosomal_bL9_C_sf"/>
</dbReference>
<dbReference type="InterPro" id="IPR020070">
    <property type="entry name" value="Ribosomal_bL9_N"/>
</dbReference>
<dbReference type="InterPro" id="IPR036935">
    <property type="entry name" value="Ribosomal_bL9_N_sf"/>
</dbReference>
<dbReference type="NCBIfam" id="TIGR00158">
    <property type="entry name" value="L9"/>
    <property type="match status" value="1"/>
</dbReference>
<dbReference type="PANTHER" id="PTHR21368">
    <property type="entry name" value="50S RIBOSOMAL PROTEIN L9"/>
    <property type="match status" value="1"/>
</dbReference>
<dbReference type="Pfam" id="PF03948">
    <property type="entry name" value="Ribosomal_L9_C"/>
    <property type="match status" value="1"/>
</dbReference>
<dbReference type="Pfam" id="PF01281">
    <property type="entry name" value="Ribosomal_L9_N"/>
    <property type="match status" value="1"/>
</dbReference>
<dbReference type="SUPFAM" id="SSF55658">
    <property type="entry name" value="L9 N-domain-like"/>
    <property type="match status" value="1"/>
</dbReference>
<dbReference type="SUPFAM" id="SSF55653">
    <property type="entry name" value="Ribosomal protein L9 C-domain"/>
    <property type="match status" value="1"/>
</dbReference>
<dbReference type="PROSITE" id="PS00651">
    <property type="entry name" value="RIBOSOMAL_L9"/>
    <property type="match status" value="1"/>
</dbReference>
<accession>Q6GD75</accession>
<reference key="1">
    <citation type="journal article" date="2004" name="Proc. Natl. Acad. Sci. U.S.A.">
        <title>Complete genomes of two clinical Staphylococcus aureus strains: evidence for the rapid evolution of virulence and drug resistance.</title>
        <authorList>
            <person name="Holden M.T.G."/>
            <person name="Feil E.J."/>
            <person name="Lindsay J.A."/>
            <person name="Peacock S.J."/>
            <person name="Day N.P.J."/>
            <person name="Enright M.C."/>
            <person name="Foster T.J."/>
            <person name="Moore C.E."/>
            <person name="Hurst L."/>
            <person name="Atkin R."/>
            <person name="Barron A."/>
            <person name="Bason N."/>
            <person name="Bentley S.D."/>
            <person name="Chillingworth C."/>
            <person name="Chillingworth T."/>
            <person name="Churcher C."/>
            <person name="Clark L."/>
            <person name="Corton C."/>
            <person name="Cronin A."/>
            <person name="Doggett J."/>
            <person name="Dowd L."/>
            <person name="Feltwell T."/>
            <person name="Hance Z."/>
            <person name="Harris B."/>
            <person name="Hauser H."/>
            <person name="Holroyd S."/>
            <person name="Jagels K."/>
            <person name="James K.D."/>
            <person name="Lennard N."/>
            <person name="Line A."/>
            <person name="Mayes R."/>
            <person name="Moule S."/>
            <person name="Mungall K."/>
            <person name="Ormond D."/>
            <person name="Quail M.A."/>
            <person name="Rabbinowitsch E."/>
            <person name="Rutherford K.M."/>
            <person name="Sanders M."/>
            <person name="Sharp S."/>
            <person name="Simmonds M."/>
            <person name="Stevens K."/>
            <person name="Whitehead S."/>
            <person name="Barrell B.G."/>
            <person name="Spratt B.G."/>
            <person name="Parkhill J."/>
        </authorList>
    </citation>
    <scope>NUCLEOTIDE SEQUENCE [LARGE SCALE GENOMIC DNA]</scope>
    <source>
        <strain>MSSA476</strain>
    </source>
</reference>
<organism>
    <name type="scientific">Staphylococcus aureus (strain MSSA476)</name>
    <dbReference type="NCBI Taxonomy" id="282459"/>
    <lineage>
        <taxon>Bacteria</taxon>
        <taxon>Bacillati</taxon>
        <taxon>Bacillota</taxon>
        <taxon>Bacilli</taxon>
        <taxon>Bacillales</taxon>
        <taxon>Staphylococcaceae</taxon>
        <taxon>Staphylococcus</taxon>
    </lineage>
</organism>
<comment type="function">
    <text evidence="1">Binds to the 23S rRNA.</text>
</comment>
<comment type="similarity">
    <text evidence="1">Belongs to the bacterial ribosomal protein bL9 family.</text>
</comment>
<keyword id="KW-0687">Ribonucleoprotein</keyword>
<keyword id="KW-0689">Ribosomal protein</keyword>
<keyword id="KW-0694">RNA-binding</keyword>
<keyword id="KW-0699">rRNA-binding</keyword>
<evidence type="ECO:0000255" key="1">
    <source>
        <dbReference type="HAMAP-Rule" id="MF_00503"/>
    </source>
</evidence>
<evidence type="ECO:0000305" key="2"/>
<feature type="chain" id="PRO_0000176679" description="Large ribosomal subunit protein bL9">
    <location>
        <begin position="1"/>
        <end position="148"/>
    </location>
</feature>
<sequence length="148" mass="16454">MKVIFTQDVKGKGKKGEVKEVPVGYANNFLLKKNYAVEATPGNLKQLELQKKRAKQERQQEIEDAKALKETLSNIEVEVSAKTGEGGKLFGSVSTKQIAEALKAQHDIKIDKRKMDLPNGIHSLGYTNVPVKLDKEVEGTIRVHTVEQ</sequence>